<sequence length="396" mass="42547">MTTNTVSRKVAWLRVVTLAVAAFIFNTTEFVPVGLLSDIAHSFHMQTAQVGIMLTIYAWVVALMSLPFMLMTSQVERRKLLICLFVVFIASHVLSFLSWSFTVLVISRIGVAFAHAIFWSITASLAIRMAPAGKRAQALSLIATGTALAMVLGLPLGRIVGQYFGWRMTFFAIGIGALITLLCLIKLLPLLPSEHSGSLKSLPLLFRRPALMSIYLLTVVVVTAHYTAYSYIEPFVQNIAGFSANFATALLLLLGGAGIIGSVIFGKLGNQYASALVSTAIALLLVCLALLLPAANSEIHLGVLSIFWGIAMMIIGLGMQVKVLALAPDATDVAMALFSGIFNIGIGAGALVGNQVSLHWSMSMIGYVGAVPAFAALIWSIIIFRRWPVTLEEQTQ</sequence>
<reference key="1">
    <citation type="journal article" date="2009" name="PLoS Genet.">
        <title>Organised genome dynamics in the Escherichia coli species results in highly diverse adaptive paths.</title>
        <authorList>
            <person name="Touchon M."/>
            <person name="Hoede C."/>
            <person name="Tenaillon O."/>
            <person name="Barbe V."/>
            <person name="Baeriswyl S."/>
            <person name="Bidet P."/>
            <person name="Bingen E."/>
            <person name="Bonacorsi S."/>
            <person name="Bouchier C."/>
            <person name="Bouvet O."/>
            <person name="Calteau A."/>
            <person name="Chiapello H."/>
            <person name="Clermont O."/>
            <person name="Cruveiller S."/>
            <person name="Danchin A."/>
            <person name="Diard M."/>
            <person name="Dossat C."/>
            <person name="Karoui M.E."/>
            <person name="Frapy E."/>
            <person name="Garry L."/>
            <person name="Ghigo J.M."/>
            <person name="Gilles A.M."/>
            <person name="Johnson J."/>
            <person name="Le Bouguenec C."/>
            <person name="Lescat M."/>
            <person name="Mangenot S."/>
            <person name="Martinez-Jehanne V."/>
            <person name="Matic I."/>
            <person name="Nassif X."/>
            <person name="Oztas S."/>
            <person name="Petit M.A."/>
            <person name="Pichon C."/>
            <person name="Rouy Z."/>
            <person name="Ruf C.S."/>
            <person name="Schneider D."/>
            <person name="Tourret J."/>
            <person name="Vacherie B."/>
            <person name="Vallenet D."/>
            <person name="Medigue C."/>
            <person name="Rocha E.P.C."/>
            <person name="Denamur E."/>
        </authorList>
    </citation>
    <scope>NUCLEOTIDE SEQUENCE [LARGE SCALE GENOMIC DNA]</scope>
    <source>
        <strain>S88 / ExPEC</strain>
    </source>
</reference>
<comment type="function">
    <text evidence="1">Involved in the efflux of sugars. The physiological role may be the reduction of the intracellular concentration of toxic sugars or sugar metabolites.</text>
</comment>
<comment type="subcellular location">
    <subcellularLocation>
        <location evidence="1">Cell inner membrane</location>
        <topology evidence="1">Multi-pass membrane protein</topology>
    </subcellularLocation>
</comment>
<comment type="similarity">
    <text evidence="1">Belongs to the major facilitator superfamily. SotB (TC 2.A.1.2) family.</text>
</comment>
<accession>B7MMZ1</accession>
<protein>
    <recommendedName>
        <fullName evidence="1">Probable sugar efflux transporter</fullName>
    </recommendedName>
</protein>
<gene>
    <name evidence="1" type="primary">sotB</name>
    <name type="ordered locus">ECS88_1604</name>
</gene>
<evidence type="ECO:0000255" key="1">
    <source>
        <dbReference type="HAMAP-Rule" id="MF_00517"/>
    </source>
</evidence>
<proteinExistence type="inferred from homology"/>
<feature type="chain" id="PRO_1000127454" description="Probable sugar efflux transporter">
    <location>
        <begin position="1"/>
        <end position="396"/>
    </location>
</feature>
<feature type="transmembrane region" description="Helical" evidence="1">
    <location>
        <begin position="15"/>
        <end position="35"/>
    </location>
</feature>
<feature type="transmembrane region" description="Helical" evidence="1">
    <location>
        <begin position="50"/>
        <end position="70"/>
    </location>
</feature>
<feature type="transmembrane region" description="Helical" evidence="1">
    <location>
        <begin position="81"/>
        <end position="101"/>
    </location>
</feature>
<feature type="transmembrane region" description="Helical" evidence="1">
    <location>
        <begin position="103"/>
        <end position="123"/>
    </location>
</feature>
<feature type="transmembrane region" description="Helical" evidence="1">
    <location>
        <begin position="136"/>
        <end position="156"/>
    </location>
</feature>
<feature type="transmembrane region" description="Helical" evidence="1">
    <location>
        <begin position="170"/>
        <end position="190"/>
    </location>
</feature>
<feature type="transmembrane region" description="Helical" evidence="1">
    <location>
        <begin position="209"/>
        <end position="229"/>
    </location>
</feature>
<feature type="transmembrane region" description="Helical" evidence="1">
    <location>
        <begin position="246"/>
        <end position="266"/>
    </location>
</feature>
<feature type="transmembrane region" description="Helical" evidence="1">
    <location>
        <begin position="275"/>
        <end position="295"/>
    </location>
</feature>
<feature type="transmembrane region" description="Helical" evidence="1">
    <location>
        <begin position="299"/>
        <end position="319"/>
    </location>
</feature>
<feature type="transmembrane region" description="Helical" evidence="1">
    <location>
        <begin position="333"/>
        <end position="353"/>
    </location>
</feature>
<feature type="transmembrane region" description="Helical" evidence="1">
    <location>
        <begin position="364"/>
        <end position="384"/>
    </location>
</feature>
<name>SOTB_ECO45</name>
<organism>
    <name type="scientific">Escherichia coli O45:K1 (strain S88 / ExPEC)</name>
    <dbReference type="NCBI Taxonomy" id="585035"/>
    <lineage>
        <taxon>Bacteria</taxon>
        <taxon>Pseudomonadati</taxon>
        <taxon>Pseudomonadota</taxon>
        <taxon>Gammaproteobacteria</taxon>
        <taxon>Enterobacterales</taxon>
        <taxon>Enterobacteriaceae</taxon>
        <taxon>Escherichia</taxon>
    </lineage>
</organism>
<dbReference type="EMBL" id="CU928161">
    <property type="protein sequence ID" value="CAR02919.1"/>
    <property type="molecule type" value="Genomic_DNA"/>
</dbReference>
<dbReference type="SMR" id="B7MMZ1"/>
<dbReference type="KEGG" id="ecz:ECS88_1604"/>
<dbReference type="HOGENOM" id="CLU_001265_61_1_6"/>
<dbReference type="Proteomes" id="UP000000747">
    <property type="component" value="Chromosome"/>
</dbReference>
<dbReference type="GO" id="GO:0005886">
    <property type="term" value="C:plasma membrane"/>
    <property type="evidence" value="ECO:0007669"/>
    <property type="project" value="UniProtKB-SubCell"/>
</dbReference>
<dbReference type="GO" id="GO:0015144">
    <property type="term" value="F:carbohydrate transmembrane transporter activity"/>
    <property type="evidence" value="ECO:0007669"/>
    <property type="project" value="UniProtKB-UniRule"/>
</dbReference>
<dbReference type="CDD" id="cd17324">
    <property type="entry name" value="MFS_NepI_like"/>
    <property type="match status" value="1"/>
</dbReference>
<dbReference type="FunFam" id="1.20.1250.20:FF:000079">
    <property type="entry name" value="Probable sugar efflux transporter"/>
    <property type="match status" value="1"/>
</dbReference>
<dbReference type="Gene3D" id="1.20.1250.20">
    <property type="entry name" value="MFS general substrate transporter like domains"/>
    <property type="match status" value="1"/>
</dbReference>
<dbReference type="HAMAP" id="MF_00517">
    <property type="entry name" value="MFS_SotB"/>
    <property type="match status" value="1"/>
</dbReference>
<dbReference type="InterPro" id="IPR011701">
    <property type="entry name" value="MFS"/>
</dbReference>
<dbReference type="InterPro" id="IPR020846">
    <property type="entry name" value="MFS_dom"/>
</dbReference>
<dbReference type="InterPro" id="IPR050189">
    <property type="entry name" value="MFS_Efflux_Transporters"/>
</dbReference>
<dbReference type="InterPro" id="IPR036259">
    <property type="entry name" value="MFS_trans_sf"/>
</dbReference>
<dbReference type="InterPro" id="IPR023495">
    <property type="entry name" value="Sugar_effux_transptr_put"/>
</dbReference>
<dbReference type="NCBIfam" id="NF002921">
    <property type="entry name" value="PRK03545.1"/>
    <property type="match status" value="1"/>
</dbReference>
<dbReference type="PANTHER" id="PTHR43124">
    <property type="entry name" value="PURINE EFFLUX PUMP PBUE"/>
    <property type="match status" value="1"/>
</dbReference>
<dbReference type="PANTHER" id="PTHR43124:SF4">
    <property type="entry name" value="SUGAR EFFLUX TRANSPORTER"/>
    <property type="match status" value="1"/>
</dbReference>
<dbReference type="Pfam" id="PF07690">
    <property type="entry name" value="MFS_1"/>
    <property type="match status" value="1"/>
</dbReference>
<dbReference type="SUPFAM" id="SSF103473">
    <property type="entry name" value="MFS general substrate transporter"/>
    <property type="match status" value="1"/>
</dbReference>
<dbReference type="PROSITE" id="PS50850">
    <property type="entry name" value="MFS"/>
    <property type="match status" value="1"/>
</dbReference>
<keyword id="KW-0997">Cell inner membrane</keyword>
<keyword id="KW-1003">Cell membrane</keyword>
<keyword id="KW-0472">Membrane</keyword>
<keyword id="KW-1185">Reference proteome</keyword>
<keyword id="KW-0762">Sugar transport</keyword>
<keyword id="KW-0812">Transmembrane</keyword>
<keyword id="KW-1133">Transmembrane helix</keyword>
<keyword id="KW-0813">Transport</keyword>